<evidence type="ECO:0000255" key="1">
    <source>
        <dbReference type="HAMAP-Rule" id="MF_00185"/>
    </source>
</evidence>
<gene>
    <name evidence="1" type="primary">miaA</name>
    <name type="ordered locus">THEYE_A0817</name>
</gene>
<comment type="function">
    <text evidence="1">Catalyzes the transfer of a dimethylallyl group onto the adenine at position 37 in tRNAs that read codons beginning with uridine, leading to the formation of N6-(dimethylallyl)adenosine (i(6)A).</text>
</comment>
<comment type="catalytic activity">
    <reaction evidence="1">
        <text>adenosine(37) in tRNA + dimethylallyl diphosphate = N(6)-dimethylallyladenosine(37) in tRNA + diphosphate</text>
        <dbReference type="Rhea" id="RHEA:26482"/>
        <dbReference type="Rhea" id="RHEA-COMP:10162"/>
        <dbReference type="Rhea" id="RHEA-COMP:10375"/>
        <dbReference type="ChEBI" id="CHEBI:33019"/>
        <dbReference type="ChEBI" id="CHEBI:57623"/>
        <dbReference type="ChEBI" id="CHEBI:74411"/>
        <dbReference type="ChEBI" id="CHEBI:74415"/>
        <dbReference type="EC" id="2.5.1.75"/>
    </reaction>
</comment>
<comment type="cofactor">
    <cofactor evidence="1">
        <name>Mg(2+)</name>
        <dbReference type="ChEBI" id="CHEBI:18420"/>
    </cofactor>
</comment>
<comment type="subunit">
    <text evidence="1">Monomer.</text>
</comment>
<comment type="similarity">
    <text evidence="1">Belongs to the IPP transferase family.</text>
</comment>
<name>MIAA_THEYD</name>
<reference key="1">
    <citation type="submission" date="2008-08" db="EMBL/GenBank/DDBJ databases">
        <title>The complete genome sequence of Thermodesulfovibrio yellowstonii strain ATCC 51303 / DSM 11347 / YP87.</title>
        <authorList>
            <person name="Dodson R.J."/>
            <person name="Durkin A.S."/>
            <person name="Wu M."/>
            <person name="Eisen J."/>
            <person name="Sutton G."/>
        </authorList>
    </citation>
    <scope>NUCLEOTIDE SEQUENCE [LARGE SCALE GENOMIC DNA]</scope>
    <source>
        <strain>ATCC 51303 / DSM 11347 / YP87</strain>
    </source>
</reference>
<keyword id="KW-0067">ATP-binding</keyword>
<keyword id="KW-0460">Magnesium</keyword>
<keyword id="KW-0547">Nucleotide-binding</keyword>
<keyword id="KW-1185">Reference proteome</keyword>
<keyword id="KW-0808">Transferase</keyword>
<keyword id="KW-0819">tRNA processing</keyword>
<proteinExistence type="inferred from homology"/>
<feature type="chain" id="PRO_1000191870" description="tRNA dimethylallyltransferase">
    <location>
        <begin position="1"/>
        <end position="315"/>
    </location>
</feature>
<feature type="region of interest" description="Interaction with substrate tRNA" evidence="1">
    <location>
        <begin position="35"/>
        <end position="38"/>
    </location>
</feature>
<feature type="binding site" evidence="1">
    <location>
        <begin position="10"/>
        <end position="17"/>
    </location>
    <ligand>
        <name>ATP</name>
        <dbReference type="ChEBI" id="CHEBI:30616"/>
    </ligand>
</feature>
<feature type="binding site" evidence="1">
    <location>
        <begin position="12"/>
        <end position="17"/>
    </location>
    <ligand>
        <name>substrate</name>
    </ligand>
</feature>
<feature type="site" description="Interaction with substrate tRNA" evidence="1">
    <location>
        <position position="101"/>
    </location>
</feature>
<feature type="site" description="Interaction with substrate tRNA" evidence="1">
    <location>
        <position position="123"/>
    </location>
</feature>
<dbReference type="EC" id="2.5.1.75" evidence="1"/>
<dbReference type="EMBL" id="CP001147">
    <property type="protein sequence ID" value="ACI22065.1"/>
    <property type="molecule type" value="Genomic_DNA"/>
</dbReference>
<dbReference type="RefSeq" id="WP_012546758.1">
    <property type="nucleotide sequence ID" value="NC_011296.1"/>
</dbReference>
<dbReference type="RefSeq" id="YP_002248658.1">
    <property type="nucleotide sequence ID" value="NC_011296.1"/>
</dbReference>
<dbReference type="SMR" id="B5YK93"/>
<dbReference type="FunCoup" id="B5YK93">
    <property type="interactions" value="383"/>
</dbReference>
<dbReference type="STRING" id="289376.THEYE_A0817"/>
<dbReference type="EnsemblBacteria" id="ACI22065">
    <property type="protein sequence ID" value="ACI22065"/>
    <property type="gene ID" value="THEYE_A0817"/>
</dbReference>
<dbReference type="KEGG" id="tye:THEYE_A0817"/>
<dbReference type="PATRIC" id="fig|289376.4.peg.807"/>
<dbReference type="eggNOG" id="COG0324">
    <property type="taxonomic scope" value="Bacteria"/>
</dbReference>
<dbReference type="HOGENOM" id="CLU_032616_0_0_0"/>
<dbReference type="InParanoid" id="B5YK93"/>
<dbReference type="OrthoDB" id="9776390at2"/>
<dbReference type="Proteomes" id="UP000000718">
    <property type="component" value="Chromosome"/>
</dbReference>
<dbReference type="GO" id="GO:0005524">
    <property type="term" value="F:ATP binding"/>
    <property type="evidence" value="ECO:0007669"/>
    <property type="project" value="UniProtKB-UniRule"/>
</dbReference>
<dbReference type="GO" id="GO:0052381">
    <property type="term" value="F:tRNA dimethylallyltransferase activity"/>
    <property type="evidence" value="ECO:0000318"/>
    <property type="project" value="GO_Central"/>
</dbReference>
<dbReference type="GO" id="GO:0006400">
    <property type="term" value="P:tRNA modification"/>
    <property type="evidence" value="ECO:0000318"/>
    <property type="project" value="GO_Central"/>
</dbReference>
<dbReference type="Gene3D" id="1.10.20.140">
    <property type="match status" value="1"/>
</dbReference>
<dbReference type="Gene3D" id="3.40.50.300">
    <property type="entry name" value="P-loop containing nucleotide triphosphate hydrolases"/>
    <property type="match status" value="1"/>
</dbReference>
<dbReference type="HAMAP" id="MF_00185">
    <property type="entry name" value="IPP_trans"/>
    <property type="match status" value="1"/>
</dbReference>
<dbReference type="InterPro" id="IPR039657">
    <property type="entry name" value="Dimethylallyltransferase"/>
</dbReference>
<dbReference type="InterPro" id="IPR018022">
    <property type="entry name" value="IPT"/>
</dbReference>
<dbReference type="InterPro" id="IPR027417">
    <property type="entry name" value="P-loop_NTPase"/>
</dbReference>
<dbReference type="NCBIfam" id="TIGR00174">
    <property type="entry name" value="miaA"/>
    <property type="match status" value="1"/>
</dbReference>
<dbReference type="PANTHER" id="PTHR11088">
    <property type="entry name" value="TRNA DIMETHYLALLYLTRANSFERASE"/>
    <property type="match status" value="1"/>
</dbReference>
<dbReference type="PANTHER" id="PTHR11088:SF60">
    <property type="entry name" value="TRNA DIMETHYLALLYLTRANSFERASE"/>
    <property type="match status" value="1"/>
</dbReference>
<dbReference type="Pfam" id="PF01715">
    <property type="entry name" value="IPPT"/>
    <property type="match status" value="1"/>
</dbReference>
<dbReference type="SUPFAM" id="SSF52540">
    <property type="entry name" value="P-loop containing nucleoside triphosphate hydrolases"/>
    <property type="match status" value="2"/>
</dbReference>
<accession>B5YK93</accession>
<organism>
    <name type="scientific">Thermodesulfovibrio yellowstonii (strain ATCC 51303 / DSM 11347 / YP87)</name>
    <dbReference type="NCBI Taxonomy" id="289376"/>
    <lineage>
        <taxon>Bacteria</taxon>
        <taxon>Pseudomonadati</taxon>
        <taxon>Nitrospirota</taxon>
        <taxon>Thermodesulfovibrionia</taxon>
        <taxon>Thermodesulfovibrionales</taxon>
        <taxon>Thermodesulfovibrionaceae</taxon>
        <taxon>Thermodesulfovibrio</taxon>
    </lineage>
</organism>
<protein>
    <recommendedName>
        <fullName evidence="1">tRNA dimethylallyltransferase</fullName>
        <ecNumber evidence="1">2.5.1.75</ecNumber>
    </recommendedName>
    <alternativeName>
        <fullName evidence="1">Dimethylallyl diphosphate:tRNA dimethylallyltransferase</fullName>
        <shortName evidence="1">DMAPP:tRNA dimethylallyltransferase</shortName>
        <shortName evidence="1">DMATase</shortName>
    </alternativeName>
    <alternativeName>
        <fullName evidence="1">Isopentenyl-diphosphate:tRNA isopentenyltransferase</fullName>
        <shortName evidence="1">IPP transferase</shortName>
        <shortName evidence="1">IPPT</shortName>
        <shortName evidence="1">IPTase</shortName>
    </alternativeName>
</protein>
<sequence>MKRKIVILLGPTGVGKTELSIKIAKLLNAEIISSDSMQIYKYMDIGTAKPTLEQRKEVIHHMIDIVNPWDYFSTGAYIEIVKEVIEKIFEREKIPLVVGGTGLYLRAMTEGIFEGPDADWNLRMELMNKERDNPGFLYNLLKEIDPIKADKIYPSDLRRILRALEVFFKEKKQISELQEKLTKPLSYNFIKIGVTRERKELYRIIEERVDKMICSGLIEEVRNVLTLIKRNATSLSPLPALQAIGYKEIAGCLADLYSIDEAVRLIKKRTKMYAKRQFTWFRKEKDIMWFDISGRHDFEIIAEQIYSALSEILHK</sequence>